<name>SCPA_CLOTE</name>
<keyword id="KW-0131">Cell cycle</keyword>
<keyword id="KW-0132">Cell division</keyword>
<keyword id="KW-0159">Chromosome partition</keyword>
<keyword id="KW-0963">Cytoplasm</keyword>
<keyword id="KW-1185">Reference proteome</keyword>
<protein>
    <recommendedName>
        <fullName evidence="1">Segregation and condensation protein A</fullName>
    </recommendedName>
</protein>
<evidence type="ECO:0000255" key="1">
    <source>
        <dbReference type="HAMAP-Rule" id="MF_01805"/>
    </source>
</evidence>
<feature type="chain" id="PRO_0000211083" description="Segregation and condensation protein A">
    <location>
        <begin position="1"/>
        <end position="254"/>
    </location>
</feature>
<accession>Q894L2</accession>
<sequence length="254" mass="30076">MELQIKIQNFQGPFDLLLHLIKKNQLDIYNINISEITGQYMEYIESLKEMDLEVTSEFIVIASTLLQIKSRELLPKIQDEEEEEISEENPEKILLDKLIEYKKFKNVASYLKGRLEKGFTVFSKKPEIIEKKEEEDKDIFIDVTILELYNLYNELITKYKDKINLSNTIPEEIELEEFKIGDKMNYLKSRIIENKNLSFSQISKECSCKGEVIVTFLALLELIRIKIVKVVQEGNFKEIYLERMEENEADELYY</sequence>
<comment type="function">
    <text evidence="1">Participates in chromosomal partition during cell division. May act via the formation of a condensin-like complex containing Smc and ScpB that pull DNA away from mid-cell into both cell halves.</text>
</comment>
<comment type="subunit">
    <text evidence="1">Component of a cohesin-like complex composed of ScpA, ScpB and the Smc homodimer, in which ScpA and ScpB bind to the head domain of Smc. The presence of the three proteins is required for the association of the complex with DNA.</text>
</comment>
<comment type="subcellular location">
    <subcellularLocation>
        <location evidence="1">Cytoplasm</location>
    </subcellularLocation>
    <text evidence="1">Associated with two foci at the outer edges of the nucleoid region in young cells, and at four foci within both cell halves in older cells.</text>
</comment>
<comment type="similarity">
    <text evidence="1">Belongs to the ScpA family.</text>
</comment>
<dbReference type="EMBL" id="AE015927">
    <property type="protein sequence ID" value="AAO36080.1"/>
    <property type="molecule type" value="Genomic_DNA"/>
</dbReference>
<dbReference type="RefSeq" id="WP_011099740.1">
    <property type="nucleotide sequence ID" value="NC_004557.1"/>
</dbReference>
<dbReference type="SMR" id="Q894L2"/>
<dbReference type="STRING" id="212717.CTC_01529"/>
<dbReference type="GeneID" id="24252988"/>
<dbReference type="KEGG" id="ctc:CTC_01529"/>
<dbReference type="HOGENOM" id="CLU_038686_3_0_9"/>
<dbReference type="OrthoDB" id="9811016at2"/>
<dbReference type="Proteomes" id="UP000001412">
    <property type="component" value="Chromosome"/>
</dbReference>
<dbReference type="GO" id="GO:0005737">
    <property type="term" value="C:cytoplasm"/>
    <property type="evidence" value="ECO:0007669"/>
    <property type="project" value="UniProtKB-SubCell"/>
</dbReference>
<dbReference type="GO" id="GO:0051301">
    <property type="term" value="P:cell division"/>
    <property type="evidence" value="ECO:0007669"/>
    <property type="project" value="UniProtKB-KW"/>
</dbReference>
<dbReference type="GO" id="GO:0007059">
    <property type="term" value="P:chromosome segregation"/>
    <property type="evidence" value="ECO:0007669"/>
    <property type="project" value="UniProtKB-UniRule"/>
</dbReference>
<dbReference type="GO" id="GO:0006260">
    <property type="term" value="P:DNA replication"/>
    <property type="evidence" value="ECO:0007669"/>
    <property type="project" value="UniProtKB-UniRule"/>
</dbReference>
<dbReference type="Gene3D" id="6.10.250.2410">
    <property type="match status" value="1"/>
</dbReference>
<dbReference type="Gene3D" id="1.10.10.580">
    <property type="entry name" value="Structural maintenance of chromosome 1. Chain E"/>
    <property type="match status" value="1"/>
</dbReference>
<dbReference type="HAMAP" id="MF_01805">
    <property type="entry name" value="ScpA"/>
    <property type="match status" value="1"/>
</dbReference>
<dbReference type="InterPro" id="IPR003768">
    <property type="entry name" value="ScpA"/>
</dbReference>
<dbReference type="InterPro" id="IPR023093">
    <property type="entry name" value="ScpA-like_C"/>
</dbReference>
<dbReference type="NCBIfam" id="NF000994">
    <property type="entry name" value="PRK00104.1-3"/>
    <property type="match status" value="1"/>
</dbReference>
<dbReference type="PANTHER" id="PTHR33969">
    <property type="entry name" value="SEGREGATION AND CONDENSATION PROTEIN A"/>
    <property type="match status" value="1"/>
</dbReference>
<dbReference type="PANTHER" id="PTHR33969:SF2">
    <property type="entry name" value="SEGREGATION AND CONDENSATION PROTEIN A"/>
    <property type="match status" value="1"/>
</dbReference>
<dbReference type="Pfam" id="PF02616">
    <property type="entry name" value="SMC_ScpA"/>
    <property type="match status" value="1"/>
</dbReference>
<organism>
    <name type="scientific">Clostridium tetani (strain Massachusetts / E88)</name>
    <dbReference type="NCBI Taxonomy" id="212717"/>
    <lineage>
        <taxon>Bacteria</taxon>
        <taxon>Bacillati</taxon>
        <taxon>Bacillota</taxon>
        <taxon>Clostridia</taxon>
        <taxon>Eubacteriales</taxon>
        <taxon>Clostridiaceae</taxon>
        <taxon>Clostridium</taxon>
    </lineage>
</organism>
<gene>
    <name evidence="1" type="primary">scpA</name>
    <name type="ordered locus">CTC_01529</name>
</gene>
<reference key="1">
    <citation type="journal article" date="2003" name="Proc. Natl. Acad. Sci. U.S.A.">
        <title>The genome sequence of Clostridium tetani, the causative agent of tetanus disease.</title>
        <authorList>
            <person name="Brueggemann H."/>
            <person name="Baeumer S."/>
            <person name="Fricke W.F."/>
            <person name="Wiezer A."/>
            <person name="Liesegang H."/>
            <person name="Decker I."/>
            <person name="Herzberg C."/>
            <person name="Martinez-Arias R."/>
            <person name="Merkl R."/>
            <person name="Henne A."/>
            <person name="Gottschalk G."/>
        </authorList>
    </citation>
    <scope>NUCLEOTIDE SEQUENCE [LARGE SCALE GENOMIC DNA]</scope>
    <source>
        <strain>Massachusetts / E88</strain>
    </source>
</reference>
<proteinExistence type="inferred from homology"/>